<organism>
    <name type="scientific">Albidiferax ferrireducens (strain ATCC BAA-621 / DSM 15236 / T118)</name>
    <name type="common">Rhodoferax ferrireducens</name>
    <dbReference type="NCBI Taxonomy" id="338969"/>
    <lineage>
        <taxon>Bacteria</taxon>
        <taxon>Pseudomonadati</taxon>
        <taxon>Pseudomonadota</taxon>
        <taxon>Betaproteobacteria</taxon>
        <taxon>Burkholderiales</taxon>
        <taxon>Comamonadaceae</taxon>
        <taxon>Rhodoferax</taxon>
    </lineage>
</organism>
<sequence length="231" mass="25272">MRLSPDEIIFWQHGFLKLNATIVFTWGLMLVLAVGSKLITRKLSTGLKRSRWQNLLEIVVTAIEKQIEEVGLRDPKKYLGFLGTLFLFVATASLCTVIPGYEPPTGSLSTTAALAFCVFVAVPFFGIKDQGLGGYLKSYVEPTVIMLPFNIISEISRTLALAVRLFGNMMSGAMIIGILLTITPFIFPIVMTALGLLTGMVQAYIFSILAAVYIAAATRGRKPKPEPGEKH</sequence>
<proteinExistence type="inferred from homology"/>
<reference key="1">
    <citation type="submission" date="2006-02" db="EMBL/GenBank/DDBJ databases">
        <title>Complete sequence of chromosome of Rhodoferax ferrireducens DSM 15236.</title>
        <authorList>
            <person name="Copeland A."/>
            <person name="Lucas S."/>
            <person name="Lapidus A."/>
            <person name="Barry K."/>
            <person name="Detter J.C."/>
            <person name="Glavina del Rio T."/>
            <person name="Hammon N."/>
            <person name="Israni S."/>
            <person name="Pitluck S."/>
            <person name="Brettin T."/>
            <person name="Bruce D."/>
            <person name="Han C."/>
            <person name="Tapia R."/>
            <person name="Gilna P."/>
            <person name="Kiss H."/>
            <person name="Schmutz J."/>
            <person name="Larimer F."/>
            <person name="Land M."/>
            <person name="Kyrpides N."/>
            <person name="Ivanova N."/>
            <person name="Richardson P."/>
        </authorList>
    </citation>
    <scope>NUCLEOTIDE SEQUENCE [LARGE SCALE GENOMIC DNA]</scope>
    <source>
        <strain>ATCC BAA-621 / DSM 15236 / T118</strain>
    </source>
</reference>
<dbReference type="EMBL" id="CP000267">
    <property type="protein sequence ID" value="ABD68901.1"/>
    <property type="molecule type" value="Genomic_DNA"/>
</dbReference>
<dbReference type="RefSeq" id="WP_011463470.1">
    <property type="nucleotide sequence ID" value="NC_007908.1"/>
</dbReference>
<dbReference type="SMR" id="Q21ZA2"/>
<dbReference type="STRING" id="338969.Rfer_1165"/>
<dbReference type="KEGG" id="rfr:Rfer_1165"/>
<dbReference type="eggNOG" id="COG0356">
    <property type="taxonomic scope" value="Bacteria"/>
</dbReference>
<dbReference type="HOGENOM" id="CLU_041018_2_5_4"/>
<dbReference type="OrthoDB" id="9789241at2"/>
<dbReference type="Proteomes" id="UP000008332">
    <property type="component" value="Chromosome"/>
</dbReference>
<dbReference type="GO" id="GO:0005886">
    <property type="term" value="C:plasma membrane"/>
    <property type="evidence" value="ECO:0007669"/>
    <property type="project" value="UniProtKB-SubCell"/>
</dbReference>
<dbReference type="GO" id="GO:0045259">
    <property type="term" value="C:proton-transporting ATP synthase complex"/>
    <property type="evidence" value="ECO:0007669"/>
    <property type="project" value="UniProtKB-KW"/>
</dbReference>
<dbReference type="GO" id="GO:0046933">
    <property type="term" value="F:proton-transporting ATP synthase activity, rotational mechanism"/>
    <property type="evidence" value="ECO:0007669"/>
    <property type="project" value="UniProtKB-UniRule"/>
</dbReference>
<dbReference type="GO" id="GO:0042777">
    <property type="term" value="P:proton motive force-driven plasma membrane ATP synthesis"/>
    <property type="evidence" value="ECO:0007669"/>
    <property type="project" value="TreeGrafter"/>
</dbReference>
<dbReference type="CDD" id="cd00310">
    <property type="entry name" value="ATP-synt_Fo_a_6"/>
    <property type="match status" value="1"/>
</dbReference>
<dbReference type="Gene3D" id="1.20.120.220">
    <property type="entry name" value="ATP synthase, F0 complex, subunit A"/>
    <property type="match status" value="1"/>
</dbReference>
<dbReference type="HAMAP" id="MF_01393">
    <property type="entry name" value="ATP_synth_a_bact"/>
    <property type="match status" value="1"/>
</dbReference>
<dbReference type="InterPro" id="IPR017692">
    <property type="entry name" value="Alt_ATP_synth_F0_Asu"/>
</dbReference>
<dbReference type="InterPro" id="IPR045082">
    <property type="entry name" value="ATP_syn_F0_a_bact/chloroplast"/>
</dbReference>
<dbReference type="InterPro" id="IPR000568">
    <property type="entry name" value="ATP_synth_F0_asu"/>
</dbReference>
<dbReference type="InterPro" id="IPR023011">
    <property type="entry name" value="ATP_synth_F0_asu_AS"/>
</dbReference>
<dbReference type="InterPro" id="IPR035908">
    <property type="entry name" value="F0_ATP_A_sf"/>
</dbReference>
<dbReference type="NCBIfam" id="TIGR03306">
    <property type="entry name" value="altF1_A"/>
    <property type="match status" value="1"/>
</dbReference>
<dbReference type="NCBIfam" id="TIGR01131">
    <property type="entry name" value="ATP_synt_6_or_A"/>
    <property type="match status" value="1"/>
</dbReference>
<dbReference type="NCBIfam" id="NF004481">
    <property type="entry name" value="PRK05815.2-3"/>
    <property type="match status" value="1"/>
</dbReference>
<dbReference type="PANTHER" id="PTHR42823">
    <property type="entry name" value="ATP SYNTHASE SUBUNIT A, CHLOROPLASTIC"/>
    <property type="match status" value="1"/>
</dbReference>
<dbReference type="PANTHER" id="PTHR42823:SF3">
    <property type="entry name" value="ATP SYNTHASE SUBUNIT A, CHLOROPLASTIC"/>
    <property type="match status" value="1"/>
</dbReference>
<dbReference type="Pfam" id="PF00119">
    <property type="entry name" value="ATP-synt_A"/>
    <property type="match status" value="1"/>
</dbReference>
<dbReference type="PRINTS" id="PR00123">
    <property type="entry name" value="ATPASEA"/>
</dbReference>
<dbReference type="SUPFAM" id="SSF81336">
    <property type="entry name" value="F1F0 ATP synthase subunit A"/>
    <property type="match status" value="1"/>
</dbReference>
<dbReference type="PROSITE" id="PS00449">
    <property type="entry name" value="ATPASE_A"/>
    <property type="match status" value="1"/>
</dbReference>
<keyword id="KW-0066">ATP synthesis</keyword>
<keyword id="KW-0997">Cell inner membrane</keyword>
<keyword id="KW-1003">Cell membrane</keyword>
<keyword id="KW-0138">CF(0)</keyword>
<keyword id="KW-0375">Hydrogen ion transport</keyword>
<keyword id="KW-0406">Ion transport</keyword>
<keyword id="KW-0472">Membrane</keyword>
<keyword id="KW-1185">Reference proteome</keyword>
<keyword id="KW-0812">Transmembrane</keyword>
<keyword id="KW-1133">Transmembrane helix</keyword>
<keyword id="KW-0813">Transport</keyword>
<feature type="chain" id="PRO_0000362416" description="ATP synthase subunit a">
    <location>
        <begin position="1"/>
        <end position="231"/>
    </location>
</feature>
<feature type="transmembrane region" description="Helical" evidence="1">
    <location>
        <begin position="14"/>
        <end position="34"/>
    </location>
</feature>
<feature type="transmembrane region" description="Helical" evidence="1">
    <location>
        <begin position="78"/>
        <end position="98"/>
    </location>
</feature>
<feature type="transmembrane region" description="Helical" evidence="1">
    <location>
        <begin position="107"/>
        <end position="127"/>
    </location>
</feature>
<feature type="transmembrane region" description="Helical" evidence="1">
    <location>
        <begin position="174"/>
        <end position="194"/>
    </location>
</feature>
<feature type="transmembrane region" description="Helical" evidence="1">
    <location>
        <begin position="196"/>
        <end position="216"/>
    </location>
</feature>
<gene>
    <name evidence="1" type="primary">atpB</name>
    <name type="ordered locus">Rfer_1165</name>
</gene>
<protein>
    <recommendedName>
        <fullName evidence="1">ATP synthase subunit a</fullName>
    </recommendedName>
    <alternativeName>
        <fullName evidence="1">ATP synthase F0 sector subunit a</fullName>
    </alternativeName>
    <alternativeName>
        <fullName evidence="1">F-ATPase subunit 6</fullName>
    </alternativeName>
</protein>
<name>ATP6_ALBFT</name>
<comment type="function">
    <text evidence="1">Key component of the proton channel; it plays a direct role in the translocation of protons across the membrane.</text>
</comment>
<comment type="subunit">
    <text evidence="1">F-type ATPases have 2 components, CF(1) - the catalytic core - and CF(0) - the membrane proton channel. CF(1) has five subunits: alpha(3), beta(3), gamma(1), delta(1), epsilon(1). CF(0) has three main subunits: a(1), b(2) and c(9-12). The alpha and beta chains form an alternating ring which encloses part of the gamma chain. CF(1) is attached to CF(0) by a central stalk formed by the gamma and epsilon chains, while a peripheral stalk is formed by the delta and b chains.</text>
</comment>
<comment type="subcellular location">
    <subcellularLocation>
        <location evidence="1">Cell inner membrane</location>
        <topology evidence="1">Multi-pass membrane protein</topology>
    </subcellularLocation>
</comment>
<comment type="similarity">
    <text evidence="1">Belongs to the ATPase A chain family.</text>
</comment>
<evidence type="ECO:0000255" key="1">
    <source>
        <dbReference type="HAMAP-Rule" id="MF_01393"/>
    </source>
</evidence>
<accession>Q21ZA2</accession>